<sequence>GIACLCDSDGPSVRGNTLSGTYWLAGCPSGWHNCKSSGQLIGACCKQ</sequence>
<proteinExistence type="evidence at protein level"/>
<name>NA11_ANTEL</name>
<accession>P0C1F0</accession>
<reference key="1">
    <citation type="journal article" date="2001" name="Toxicon">
        <title>Isolation and characterisation of five neurotoxic and cardiotoxic polypeptides from the sea anemone Anthopleura elegantissima.</title>
        <authorList>
            <person name="Bruhn T."/>
            <person name="Schaller C."/>
            <person name="Schulze C."/>
            <person name="Sanchez-Rodriguez J."/>
            <person name="Dannmeier C."/>
            <person name="Ravens U."/>
            <person name="Heubach J.F."/>
            <person name="Eckhardt K."/>
            <person name="Schmidtmayer J."/>
            <person name="Schmidt H."/>
            <person name="Aneiros A."/>
            <person name="Wachter E."/>
            <person name="Beress L."/>
        </authorList>
    </citation>
    <scope>PROTEIN SEQUENCE</scope>
    <scope>FUNCTION</scope>
    <scope>TOXIC DOSE</scope>
</reference>
<reference key="2">
    <citation type="journal article" date="2012" name="Toxicon">
        <title>Development of a rational nomenclature for naming peptide and protein toxins from sea anemones.</title>
        <authorList>
            <person name="Oliveira J.S."/>
            <person name="Fuentes-Silva D."/>
            <person name="King G.F."/>
        </authorList>
    </citation>
    <scope>NOMENCLATURE</scope>
</reference>
<protein>
    <recommendedName>
        <fullName evidence="4">Delta-actitoxin-Ael1b</fullName>
        <shortName evidence="4">Delta-AITX-Ael1b</shortName>
    </recommendedName>
    <alternativeName>
        <fullName evidence="3">Toxin APE 1-1</fullName>
    </alternativeName>
</protein>
<organism>
    <name type="scientific">Anthopleura elegantissima</name>
    <name type="common">Green aggregating anemone</name>
    <name type="synonym">Actinia elegantissima</name>
    <dbReference type="NCBI Taxonomy" id="6110"/>
    <lineage>
        <taxon>Eukaryota</taxon>
        <taxon>Metazoa</taxon>
        <taxon>Cnidaria</taxon>
        <taxon>Anthozoa</taxon>
        <taxon>Hexacorallia</taxon>
        <taxon>Actiniaria</taxon>
        <taxon>Actiniidae</taxon>
        <taxon>Anthopleura</taxon>
    </lineage>
</organism>
<dbReference type="SMR" id="P0C1F0"/>
<dbReference type="GO" id="GO:0005576">
    <property type="term" value="C:extracellular region"/>
    <property type="evidence" value="ECO:0007669"/>
    <property type="project" value="UniProtKB-SubCell"/>
</dbReference>
<dbReference type="GO" id="GO:0042151">
    <property type="term" value="C:nematocyst"/>
    <property type="evidence" value="ECO:0007669"/>
    <property type="project" value="UniProtKB-SubCell"/>
</dbReference>
<dbReference type="GO" id="GO:0017080">
    <property type="term" value="F:sodium channel regulator activity"/>
    <property type="evidence" value="ECO:0007669"/>
    <property type="project" value="UniProtKB-KW"/>
</dbReference>
<dbReference type="GO" id="GO:0090729">
    <property type="term" value="F:toxin activity"/>
    <property type="evidence" value="ECO:0007669"/>
    <property type="project" value="UniProtKB-KW"/>
</dbReference>
<dbReference type="GO" id="GO:0009966">
    <property type="term" value="P:regulation of signal transduction"/>
    <property type="evidence" value="ECO:0007669"/>
    <property type="project" value="InterPro"/>
</dbReference>
<dbReference type="Gene3D" id="2.20.20.10">
    <property type="entry name" value="Anthopleurin-A"/>
    <property type="match status" value="1"/>
</dbReference>
<dbReference type="InterPro" id="IPR000693">
    <property type="entry name" value="Anenome_toxin"/>
</dbReference>
<dbReference type="InterPro" id="IPR023355">
    <property type="entry name" value="Myo_ane_neurotoxin_sf"/>
</dbReference>
<dbReference type="Pfam" id="PF00706">
    <property type="entry name" value="Toxin_4"/>
    <property type="match status" value="1"/>
</dbReference>
<dbReference type="PIRSF" id="PIRSF001905">
    <property type="entry name" value="Anenome_toxin"/>
    <property type="match status" value="1"/>
</dbReference>
<dbReference type="SUPFAM" id="SSF57392">
    <property type="entry name" value="Defensin-like"/>
    <property type="match status" value="1"/>
</dbReference>
<comment type="function">
    <text evidence="2">Produces a positive inotropic effect in mammalian heart muscle. Modifies current passing through the fast sodium channel (Nav) in neuroblastoma cells, leading to delayed and incomplete inactivation. Paralyzes the shore crab (C.maenas) by tetanic contractions after intramuscular injection.</text>
</comment>
<comment type="subcellular location">
    <subcellularLocation>
        <location evidence="5">Secreted</location>
    </subcellularLocation>
    <subcellularLocation>
        <location evidence="5">Nematocyst</location>
    </subcellularLocation>
</comment>
<comment type="toxic dose">
    <text evidence="2">LD(50) is 10 ug/kg by intramuscular injection into crabs.</text>
</comment>
<comment type="similarity">
    <text evidence="5">Belongs to the sea anemone sodium channel inhibitory toxin family. Type I subfamily.</text>
</comment>
<evidence type="ECO:0000250" key="1">
    <source>
        <dbReference type="UniProtKB" id="P10453"/>
    </source>
</evidence>
<evidence type="ECO:0000269" key="2">
    <source>
    </source>
</evidence>
<evidence type="ECO:0000303" key="3">
    <source>
    </source>
</evidence>
<evidence type="ECO:0000303" key="4">
    <source>
    </source>
</evidence>
<evidence type="ECO:0000305" key="5"/>
<feature type="chain" id="PRO_0000236024" description="Delta-actitoxin-Ael1b" evidence="2">
    <location>
        <begin position="1"/>
        <end position="47"/>
    </location>
</feature>
<feature type="disulfide bond" evidence="1">
    <location>
        <begin position="4"/>
        <end position="44"/>
    </location>
</feature>
<feature type="disulfide bond" evidence="1">
    <location>
        <begin position="6"/>
        <end position="34"/>
    </location>
</feature>
<feature type="disulfide bond" evidence="1">
    <location>
        <begin position="27"/>
        <end position="45"/>
    </location>
</feature>
<keyword id="KW-0123">Cardiotoxin</keyword>
<keyword id="KW-0903">Direct protein sequencing</keyword>
<keyword id="KW-1015">Disulfide bond</keyword>
<keyword id="KW-0872">Ion channel impairing toxin</keyword>
<keyword id="KW-0166">Nematocyst</keyword>
<keyword id="KW-0528">Neurotoxin</keyword>
<keyword id="KW-0964">Secreted</keyword>
<keyword id="KW-0800">Toxin</keyword>
<keyword id="KW-0738">Voltage-gated sodium channel impairing toxin</keyword>